<keyword id="KW-0052">Apoplast</keyword>
<keyword id="KW-0217">Developmental protein</keyword>
<keyword id="KW-0903">Direct protein sequencing</keyword>
<keyword id="KW-0372">Hormone</keyword>
<keyword id="KW-0379">Hydroxylation</keyword>
<keyword id="KW-1185">Reference proteome</keyword>
<keyword id="KW-0964">Secreted</keyword>
<keyword id="KW-0732">Signal</keyword>
<comment type="function">
    <text evidence="5 6">Extracellular signaling peptide that represses primary root growth rate and significantly inhibits lateral root formation. Modulates leaf morphology (PubMed:24179096). Regulates systemic nitrogen (N)-demand signaling. Mediates up-regulation of genes involved in N uptake and assimilation pathways (PubMed:25324386).</text>
</comment>
<comment type="subunit">
    <text evidence="1">Interacts with CEP receptors (e.g. CEPR1 and CEPR2).</text>
</comment>
<comment type="subcellular location">
    <molecule>C-terminally encoded peptide 9.2</molecule>
    <subcellularLocation>
        <location evidence="6">Secreted</location>
        <location evidence="6">Extracellular space</location>
        <location evidence="6">Apoplast</location>
    </subcellularLocation>
    <text evidence="6">Accumulates in xylem sap under nitrogen (N)-starved conditions.</text>
</comment>
<comment type="subcellular location">
    <molecule>C-terminally encoded peptide 9.3</molecule>
    <subcellularLocation>
        <location evidence="6">Secreted</location>
        <location evidence="6">Extracellular space</location>
        <location evidence="6">Apoplast</location>
    </subcellularLocation>
    <text evidence="6">Accumulates in xylem sap under nitrogen (N)-starved conditions.</text>
</comment>
<comment type="subcellular location">
    <molecule>C-terminally encoded peptide 9.4</molecule>
    <subcellularLocation>
        <location evidence="6">Secreted</location>
        <location evidence="6">Extracellular space</location>
        <location evidence="6">Apoplast</location>
    </subcellularLocation>
    <text evidence="6">Accumulates in xylem sap under nitrogen (N)-starved conditions.</text>
</comment>
<comment type="subcellular location">
    <molecule>C-terminally encoded peptide 9.5</molecule>
    <subcellularLocation>
        <location evidence="6">Secreted</location>
        <location evidence="6">Extracellular space</location>
        <location evidence="6">Apoplast</location>
    </subcellularLocation>
    <text evidence="6">Accumulates in xylem sap under nitrogen (N)-starved conditions.</text>
</comment>
<comment type="subcellular location">
    <molecule>C-terminally encoded peptide 9.1</molecule>
    <subcellularLocation>
        <location evidence="10">Secreted</location>
        <location evidence="10">Extracellular space</location>
        <location evidence="10">Apoplast</location>
    </subcellularLocation>
    <text evidence="10">Accumulates in xylem sap.</text>
</comment>
<comment type="tissue specificity">
    <text evidence="6">Expressed in lateral root primordia and in lateral roots excluding the meristem region. Also present in the aerial tissues, such as leaf petioles and the shoot apex region.</text>
</comment>
<comment type="induction">
    <text evidence="4 5 6">Induced by nitrogen (N) and potassium (K), but repressed by auxin (PubMed:24179095). Repressed in shoots in response to ammonium chloride NH(4)Cl and osmotic stress (e.g. mannitol) (PubMed:24179096). Triggered by nitrogen depletion (PubMed:25324386).</text>
</comment>
<comment type="PTM">
    <text evidence="5">Hydroxylated peptide is more active than non-hydroxylated peptide.</text>
</comment>
<comment type="PTM">
    <text evidence="6">The mature small signaling peptide is generated by proteolytic processing of the longer precursor.</text>
</comment>
<comment type="similarity">
    <text evidence="9">Belongs to the C-terminally encoded plant signaling peptide (CEP) family.</text>
</comment>
<comment type="sequence caution" evidence="9">
    <conflict type="erroneous termination">
        <sequence resource="EMBL-CDS" id="ABK28235"/>
    </conflict>
    <text>Extended C-terminus.</text>
</comment>
<comment type="sequence caution" evidence="9">
    <conflict type="erroneous initiation">
        <sequence resource="EMBL-CDS" id="AEE78685"/>
    </conflict>
    <text>Truncated N-terminus.</text>
</comment>
<comment type="sequence caution" evidence="9">
    <conflict type="erroneous initiation">
        <sequence resource="EMBL-CDS" id="CAB62490"/>
    </conflict>
    <text>Truncated N-terminus.</text>
</comment>
<feature type="signal peptide" evidence="2">
    <location>
        <begin position="1"/>
        <end position="26"/>
    </location>
</feature>
<feature type="propeptide" id="PRO_0000439986" evidence="10">
    <location>
        <begin position="28"/>
        <end position="44"/>
    </location>
</feature>
<feature type="peptide" id="PRO_0000439987" description="C-terminally encoded peptide 9.1" evidence="6">
    <location>
        <begin position="45"/>
        <end position="59"/>
    </location>
</feature>
<feature type="propeptide" id="PRO_0000439988" evidence="10">
    <location>
        <begin position="60"/>
        <end position="96"/>
    </location>
</feature>
<feature type="peptide" id="PRO_0000439989" description="C-terminally encoded peptide 9.2" evidence="6">
    <location>
        <begin position="97"/>
        <end position="111"/>
    </location>
</feature>
<feature type="propeptide" id="PRO_0000439990" evidence="10">
    <location>
        <begin position="112"/>
        <end position="148"/>
    </location>
</feature>
<feature type="peptide" id="PRO_0000439991" description="C-terminally encoded peptide 9.3" evidence="6">
    <location>
        <begin position="149"/>
        <end position="163"/>
    </location>
</feature>
<feature type="propeptide" id="PRO_0000439992" evidence="10">
    <location>
        <begin position="164"/>
        <end position="200"/>
    </location>
</feature>
<feature type="peptide" id="PRO_0000439993" description="C-terminally encoded peptide 9.4" evidence="6">
    <location>
        <begin position="201"/>
        <end position="215"/>
    </location>
</feature>
<feature type="propeptide" id="PRO_0000439994" evidence="10">
    <location>
        <begin position="216"/>
        <end position="219"/>
    </location>
</feature>
<feature type="peptide" id="PRO_0000439995" description="C-terminally encoded peptide 9.5" evidence="6">
    <location>
        <begin position="220"/>
        <end position="234"/>
    </location>
</feature>
<feature type="propeptide" id="PRO_0000439996" evidence="10">
    <location>
        <begin position="235"/>
        <end position="243"/>
    </location>
</feature>
<feature type="region of interest" description="Disordered" evidence="3">
    <location>
        <begin position="42"/>
        <end position="63"/>
    </location>
</feature>
<feature type="region of interest" description="Disordered" evidence="3">
    <location>
        <begin position="91"/>
        <end position="173"/>
    </location>
</feature>
<feature type="region of interest" description="Disordered" evidence="3">
    <location>
        <begin position="189"/>
        <end position="243"/>
    </location>
</feature>
<feature type="compositionally biased region" description="Polar residues" evidence="3">
    <location>
        <begin position="133"/>
        <end position="147"/>
    </location>
</feature>
<feature type="modified residue" description="Hydroxyproline; partial" evidence="5 6">
    <location>
        <position position="48"/>
    </location>
</feature>
<feature type="modified residue" description="Hydroxyproline" evidence="6">
    <location>
        <position position="51"/>
    </location>
</feature>
<feature type="modified residue" description="Hydroxyproline; partial" evidence="5 6">
    <location>
        <position position="55"/>
    </location>
</feature>
<feature type="modified residue" description="Hydroxyproline" evidence="6">
    <location>
        <position position="100"/>
    </location>
</feature>
<feature type="modified residue" description="Hydroxyproline" evidence="6">
    <location>
        <position position="103"/>
    </location>
</feature>
<feature type="modified residue" description="Hydroxyproline" evidence="6">
    <location>
        <position position="107"/>
    </location>
</feature>
<feature type="modified residue" description="Hydroxyproline" evidence="6">
    <location>
        <position position="152"/>
    </location>
</feature>
<feature type="modified residue" description="Hydroxyproline" evidence="6">
    <location>
        <position position="155"/>
    </location>
</feature>
<feature type="modified residue" description="Hydroxyproline" evidence="6">
    <location>
        <position position="159"/>
    </location>
</feature>
<feature type="modified residue" description="Hydroxyproline" evidence="6">
    <location>
        <position position="204"/>
    </location>
</feature>
<feature type="modified residue" description="Hydroxyproline" evidence="6">
    <location>
        <position position="207"/>
    </location>
</feature>
<feature type="modified residue" description="Hydroxyproline" evidence="6">
    <location>
        <position position="211"/>
    </location>
</feature>
<feature type="modified residue" description="Hydroxyproline" evidence="1">
    <location>
        <position position="223"/>
    </location>
</feature>
<feature type="modified residue" description="Hydroxyproline" evidence="6">
    <location>
        <position position="226"/>
    </location>
</feature>
<feature type="modified residue" description="Hydroxyproline" evidence="6">
    <location>
        <position position="230"/>
    </location>
</feature>
<dbReference type="EMBL" id="CP002686">
    <property type="protein sequence ID" value="AEE78685.1"/>
    <property type="status" value="ALT_INIT"/>
    <property type="molecule type" value="Genomic_DNA"/>
</dbReference>
<dbReference type="EMBL" id="AL133363">
    <property type="protein sequence ID" value="CAB62490.1"/>
    <property type="status" value="ALT_INIT"/>
    <property type="molecule type" value="Genomic_DNA"/>
</dbReference>
<dbReference type="EMBL" id="CP002686">
    <property type="protein sequence ID" value="ANM63933.1"/>
    <property type="molecule type" value="Genomic_DNA"/>
</dbReference>
<dbReference type="EMBL" id="DQ446754">
    <property type="protein sequence ID" value="ABE65503.1"/>
    <property type="molecule type" value="Genomic_DNA"/>
</dbReference>
<dbReference type="EMBL" id="DQ653143">
    <property type="protein sequence ID" value="ABK28235.1"/>
    <property type="status" value="ALT_SEQ"/>
    <property type="molecule type" value="Genomic_DNA"/>
</dbReference>
<dbReference type="PIR" id="T46092">
    <property type="entry name" value="T46092"/>
</dbReference>
<dbReference type="RefSeq" id="NP_001325993.1">
    <property type="nucleotide sequence ID" value="NM_001339475.1"/>
</dbReference>
<dbReference type="RefSeq" id="NP_190630.1">
    <property type="nucleotide sequence ID" value="NM_114921.1"/>
</dbReference>
<dbReference type="STRING" id="3702.A0A1I9LMX5"/>
<dbReference type="PaxDb" id="3702-AT3G50610.1"/>
<dbReference type="EnsemblPlants" id="AT3G50610.2">
    <property type="protein sequence ID" value="AT3G50610.2"/>
    <property type="gene ID" value="AT3G50610"/>
</dbReference>
<dbReference type="GeneID" id="824224"/>
<dbReference type="Gramene" id="AT3G50610.2">
    <property type="protein sequence ID" value="AT3G50610.2"/>
    <property type="gene ID" value="AT3G50610"/>
</dbReference>
<dbReference type="KEGG" id="ath:AT3G50610"/>
<dbReference type="Araport" id="AT3G50610"/>
<dbReference type="TAIR" id="AT3G50610"/>
<dbReference type="eggNOG" id="ENOG502S6UF">
    <property type="taxonomic scope" value="Eukaryota"/>
</dbReference>
<dbReference type="InParanoid" id="A0A1I9LMX5"/>
<dbReference type="OMA" id="NEDDFRP"/>
<dbReference type="PRO" id="PR:A0A1I9LMX5"/>
<dbReference type="Proteomes" id="UP000006548">
    <property type="component" value="Chromosome 3"/>
</dbReference>
<dbReference type="ExpressionAtlas" id="A0A1I9LMX5">
    <property type="expression patterns" value="baseline and differential"/>
</dbReference>
<dbReference type="GO" id="GO:0048046">
    <property type="term" value="C:apoplast"/>
    <property type="evidence" value="ECO:0000314"/>
    <property type="project" value="UniProtKB"/>
</dbReference>
<dbReference type="GO" id="GO:0005179">
    <property type="term" value="F:hormone activity"/>
    <property type="evidence" value="ECO:0000314"/>
    <property type="project" value="UniProtKB"/>
</dbReference>
<dbReference type="GO" id="GO:0006995">
    <property type="term" value="P:cellular response to nitrogen starvation"/>
    <property type="evidence" value="ECO:0000270"/>
    <property type="project" value="UniProtKB"/>
</dbReference>
<dbReference type="GO" id="GO:1902025">
    <property type="term" value="P:nitrate import"/>
    <property type="evidence" value="ECO:0000314"/>
    <property type="project" value="UniProtKB"/>
</dbReference>
<dbReference type="GO" id="GO:2000023">
    <property type="term" value="P:regulation of lateral root development"/>
    <property type="evidence" value="ECO:0000314"/>
    <property type="project" value="UniProtKB"/>
</dbReference>
<dbReference type="GO" id="GO:1901371">
    <property type="term" value="P:regulation of leaf morphogenesis"/>
    <property type="evidence" value="ECO:0000315"/>
    <property type="project" value="UniProtKB"/>
</dbReference>
<dbReference type="GO" id="GO:2000280">
    <property type="term" value="P:regulation of root development"/>
    <property type="evidence" value="ECO:0000314"/>
    <property type="project" value="UniProtKB"/>
</dbReference>
<dbReference type="GO" id="GO:0060359">
    <property type="term" value="P:response to ammonium ion"/>
    <property type="evidence" value="ECO:0000270"/>
    <property type="project" value="UniProtKB"/>
</dbReference>
<dbReference type="GO" id="GO:0009733">
    <property type="term" value="P:response to auxin"/>
    <property type="evidence" value="ECO:0000270"/>
    <property type="project" value="UniProtKB"/>
</dbReference>
<dbReference type="GO" id="GO:1901698">
    <property type="term" value="P:response to nitrogen compound"/>
    <property type="evidence" value="ECO:0000270"/>
    <property type="project" value="UniProtKB"/>
</dbReference>
<dbReference type="GO" id="GO:0006970">
    <property type="term" value="P:response to osmotic stress"/>
    <property type="evidence" value="ECO:0000270"/>
    <property type="project" value="UniProtKB"/>
</dbReference>
<dbReference type="GO" id="GO:0035864">
    <property type="term" value="P:response to potassium ion"/>
    <property type="evidence" value="ECO:0000270"/>
    <property type="project" value="UniProtKB"/>
</dbReference>
<dbReference type="GO" id="GO:0048364">
    <property type="term" value="P:root development"/>
    <property type="evidence" value="ECO:0007669"/>
    <property type="project" value="InterPro"/>
</dbReference>
<dbReference type="InterPro" id="IPR033250">
    <property type="entry name" value="CEP"/>
</dbReference>
<dbReference type="PANTHER" id="PTHR33348:SF21">
    <property type="entry name" value="PRECURSOR OF CEP10-RELATED"/>
    <property type="match status" value="1"/>
</dbReference>
<dbReference type="PANTHER" id="PTHR33348">
    <property type="entry name" value="PRECURSOR OF CEP5"/>
    <property type="match status" value="1"/>
</dbReference>
<proteinExistence type="evidence at protein level"/>
<accession>A0A1I9LMX5</accession>
<accession>A0MF19</accession>
<accession>Q9SCR4</accession>
<reference key="1">
    <citation type="journal article" date="2000" name="Nature">
        <title>Sequence and analysis of chromosome 3 of the plant Arabidopsis thaliana.</title>
        <authorList>
            <person name="Salanoubat M."/>
            <person name="Lemcke K."/>
            <person name="Rieger M."/>
            <person name="Ansorge W."/>
            <person name="Unseld M."/>
            <person name="Fartmann B."/>
            <person name="Valle G."/>
            <person name="Bloecker H."/>
            <person name="Perez-Alonso M."/>
            <person name="Obermaier B."/>
            <person name="Delseny M."/>
            <person name="Boutry M."/>
            <person name="Grivell L.A."/>
            <person name="Mache R."/>
            <person name="Puigdomenech P."/>
            <person name="De Simone V."/>
            <person name="Choisne N."/>
            <person name="Artiguenave F."/>
            <person name="Robert C."/>
            <person name="Brottier P."/>
            <person name="Wincker P."/>
            <person name="Cattolico L."/>
            <person name="Weissenbach J."/>
            <person name="Saurin W."/>
            <person name="Quetier F."/>
            <person name="Schaefer M."/>
            <person name="Mueller-Auer S."/>
            <person name="Gabel C."/>
            <person name="Fuchs M."/>
            <person name="Benes V."/>
            <person name="Wurmbach E."/>
            <person name="Drzonek H."/>
            <person name="Erfle H."/>
            <person name="Jordan N."/>
            <person name="Bangert S."/>
            <person name="Wiedelmann R."/>
            <person name="Kranz H."/>
            <person name="Voss H."/>
            <person name="Holland R."/>
            <person name="Brandt P."/>
            <person name="Nyakatura G."/>
            <person name="Vezzi A."/>
            <person name="D'Angelo M."/>
            <person name="Pallavicini A."/>
            <person name="Toppo S."/>
            <person name="Simionati B."/>
            <person name="Conrad A."/>
            <person name="Hornischer K."/>
            <person name="Kauer G."/>
            <person name="Loehnert T.-H."/>
            <person name="Nordsiek G."/>
            <person name="Reichelt J."/>
            <person name="Scharfe M."/>
            <person name="Schoen O."/>
            <person name="Bargues M."/>
            <person name="Terol J."/>
            <person name="Climent J."/>
            <person name="Navarro P."/>
            <person name="Collado C."/>
            <person name="Perez-Perez A."/>
            <person name="Ottenwaelder B."/>
            <person name="Duchemin D."/>
            <person name="Cooke R."/>
            <person name="Laudie M."/>
            <person name="Berger-Llauro C."/>
            <person name="Purnelle B."/>
            <person name="Masuy D."/>
            <person name="de Haan M."/>
            <person name="Maarse A.C."/>
            <person name="Alcaraz J.-P."/>
            <person name="Cottet A."/>
            <person name="Casacuberta E."/>
            <person name="Monfort A."/>
            <person name="Argiriou A."/>
            <person name="Flores M."/>
            <person name="Liguori R."/>
            <person name="Vitale D."/>
            <person name="Mannhaupt G."/>
            <person name="Haase D."/>
            <person name="Schoof H."/>
            <person name="Rudd S."/>
            <person name="Zaccaria P."/>
            <person name="Mewes H.-W."/>
            <person name="Mayer K.F.X."/>
            <person name="Kaul S."/>
            <person name="Town C.D."/>
            <person name="Koo H.L."/>
            <person name="Tallon L.J."/>
            <person name="Jenkins J."/>
            <person name="Rooney T."/>
            <person name="Rizzo M."/>
            <person name="Walts A."/>
            <person name="Utterback T."/>
            <person name="Fujii C.Y."/>
            <person name="Shea T.P."/>
            <person name="Creasy T.H."/>
            <person name="Haas B."/>
            <person name="Maiti R."/>
            <person name="Wu D."/>
            <person name="Peterson J."/>
            <person name="Van Aken S."/>
            <person name="Pai G."/>
            <person name="Militscher J."/>
            <person name="Sellers P."/>
            <person name="Gill J.E."/>
            <person name="Feldblyum T.V."/>
            <person name="Preuss D."/>
            <person name="Lin X."/>
            <person name="Nierman W.C."/>
            <person name="Salzberg S.L."/>
            <person name="White O."/>
            <person name="Venter J.C."/>
            <person name="Fraser C.M."/>
            <person name="Kaneko T."/>
            <person name="Nakamura Y."/>
            <person name="Sato S."/>
            <person name="Kato T."/>
            <person name="Asamizu E."/>
            <person name="Sasamoto S."/>
            <person name="Kimura T."/>
            <person name="Idesawa K."/>
            <person name="Kawashima K."/>
            <person name="Kishida Y."/>
            <person name="Kiyokawa C."/>
            <person name="Kohara M."/>
            <person name="Matsumoto M."/>
            <person name="Matsuno A."/>
            <person name="Muraki A."/>
            <person name="Nakayama S."/>
            <person name="Nakazaki N."/>
            <person name="Shinpo S."/>
            <person name="Takeuchi C."/>
            <person name="Wada T."/>
            <person name="Watanabe A."/>
            <person name="Yamada M."/>
            <person name="Yasuda M."/>
            <person name="Tabata S."/>
        </authorList>
    </citation>
    <scope>NUCLEOTIDE SEQUENCE [LARGE SCALE GENOMIC DNA]</scope>
    <source>
        <strain>cv. Columbia</strain>
    </source>
</reference>
<reference key="2">
    <citation type="journal article" date="2017" name="Plant J.">
        <title>Araport11: a complete reannotation of the Arabidopsis thaliana reference genome.</title>
        <authorList>
            <person name="Cheng C.Y."/>
            <person name="Krishnakumar V."/>
            <person name="Chan A.P."/>
            <person name="Thibaud-Nissen F."/>
            <person name="Schobel S."/>
            <person name="Town C.D."/>
        </authorList>
    </citation>
    <scope>GENOME REANNOTATION</scope>
    <source>
        <strain>cv. Columbia</strain>
    </source>
</reference>
<reference key="3">
    <citation type="journal article" date="2006" name="Plant Biotechnol. J.">
        <title>Simultaneous high-throughput recombinational cloning of open reading frames in closed and open configurations.</title>
        <authorList>
            <person name="Underwood B.A."/>
            <person name="Vanderhaeghen R."/>
            <person name="Whitford R."/>
            <person name="Town C.D."/>
            <person name="Hilson P."/>
        </authorList>
    </citation>
    <scope>NUCLEOTIDE SEQUENCE [LARGE SCALE GENOMIC DNA] OF 15-243</scope>
    <source>
        <strain>cv. Columbia</strain>
    </source>
</reference>
<reference key="4">
    <citation type="journal article" date="2013" name="J. Exp. Bot.">
        <title>The CEP family in land plants: evolutionary analyses, expression studies, and role in Arabidopsis shoot development.</title>
        <authorList>
            <person name="Roberts I."/>
            <person name="Smith S."/>
            <person name="De Rybel B."/>
            <person name="Van Den Broeke J."/>
            <person name="Smet W."/>
            <person name="De Cokere S."/>
            <person name="Mispelaere M."/>
            <person name="De Smet I."/>
            <person name="Beeckman T."/>
        </authorList>
    </citation>
    <scope>INDUCTION BY NITROGEN; POTASSIUM AND AUXIN</scope>
    <scope>GENE FAMILY</scope>
    <source>
        <strain>cv. Columbia</strain>
    </source>
</reference>
<reference key="5">
    <citation type="journal article" date="2013" name="J. Exp. Bot.">
        <title>CEP genes regulate root and shoot development in response to environmental cues and are specific to seed plants.</title>
        <authorList>
            <person name="Delay C."/>
            <person name="Imin N."/>
            <person name="Djordjevic M.A."/>
        </authorList>
    </citation>
    <scope>FUNCTION</scope>
    <scope>INDUCTION BY AMMONIUM CHLORIDE AND OSMOTIC STRESS</scope>
    <scope>HYDROXYLATION AT PRO-48 AND PRO-55</scope>
    <scope>PTM</scope>
    <scope>GENE FAMILY</scope>
    <scope>NOMENCLATURE</scope>
    <source>
        <strain>cv. Columbia</strain>
    </source>
</reference>
<reference key="6">
    <citation type="journal article" date="2014" name="Science">
        <title>Perception of root-derived peptides by shoot LRR-RKs mediates systemic N-demand signaling.</title>
        <authorList>
            <person name="Tabata R."/>
            <person name="Sumida K."/>
            <person name="Yoshii T."/>
            <person name="Ohyama K."/>
            <person name="Shinohara H."/>
            <person name="Matsubayashi Y."/>
        </authorList>
    </citation>
    <scope>PROTEIN SEQUENCE OF 45-59; 97-111; 149-163; 201-215 AND 220-234</scope>
    <scope>PTM</scope>
    <scope>FUNCTION</scope>
    <scope>HYDROXYLATION AT PRO-48; PRO-51; PRO-55; PRO-100; PRO-103; PRO-107; PRO-152; PRO-155; PRO-159; PRO-204; PRO-207; PRO-211; PRO-226 AND PRO-230</scope>
    <scope>TISSUE SPECIFICITY</scope>
    <scope>INDUCTION BY NITROGEN DEPLETION</scope>
    <scope>SUBCELLULAR LOCATION</scope>
    <source>
        <strain>cv. No-0</strain>
    </source>
</reference>
<organism>
    <name type="scientific">Arabidopsis thaliana</name>
    <name type="common">Mouse-ear cress</name>
    <dbReference type="NCBI Taxonomy" id="3702"/>
    <lineage>
        <taxon>Eukaryota</taxon>
        <taxon>Viridiplantae</taxon>
        <taxon>Streptophyta</taxon>
        <taxon>Embryophyta</taxon>
        <taxon>Tracheophyta</taxon>
        <taxon>Spermatophyta</taxon>
        <taxon>Magnoliopsida</taxon>
        <taxon>eudicotyledons</taxon>
        <taxon>Gunneridae</taxon>
        <taxon>Pentapetalae</taxon>
        <taxon>rosids</taxon>
        <taxon>malvids</taxon>
        <taxon>Brassicales</taxon>
        <taxon>Brassicaceae</taxon>
        <taxon>Camelineae</taxon>
        <taxon>Arabidopsis</taxon>
    </lineage>
</organism>
<protein>
    <recommendedName>
        <fullName evidence="7">Precursor of CEP9</fullName>
        <shortName evidence="7">PCEP9</shortName>
    </recommendedName>
    <component>
        <recommendedName>
            <fullName evidence="7">C-terminally encoded peptide 9.1</fullName>
            <shortName evidence="7">CEP9.1</shortName>
            <shortName evidence="8">CEP9a</shortName>
        </recommendedName>
    </component>
    <component>
        <recommendedName>
            <fullName evidence="7">C-terminally encoded peptide 9.2</fullName>
            <shortName evidence="7">CEP9.2</shortName>
            <shortName evidence="8">CEP9b</shortName>
        </recommendedName>
    </component>
    <component>
        <recommendedName>
            <fullName evidence="7">C-terminally encoded peptide 9.3</fullName>
            <shortName evidence="7">CEP9.3</shortName>
            <shortName evidence="8">CEP9c</shortName>
        </recommendedName>
    </component>
    <component>
        <recommendedName>
            <fullName evidence="7">C-terminally encoded peptide 9.4</fullName>
            <shortName evidence="7">CEP9.4</shortName>
            <shortName evidence="8">CEP9d</shortName>
        </recommendedName>
    </component>
    <component>
        <recommendedName>
            <fullName evidence="7">C-terminally encoded peptide 9.5</fullName>
            <shortName evidence="7">CEP9.5</shortName>
            <shortName evidence="8">CEP9e</shortName>
        </recommendedName>
    </component>
</protein>
<gene>
    <name evidence="7" type="primary">CEP9</name>
    <name evidence="11" type="ordered locus">At3g50610</name>
    <name evidence="12" type="ORF">T20E23.210</name>
</gene>
<sequence length="243" mass="26206">MKLLSITLTSIVISMVFYQTPITTEARSLRKTNDQDHFKAGFTDDFVPTSPGNSPGVGHKKGNVNVEGFQDDFKPTEGRKLLKTNVQDHFKTGSTDDFAPTSPGHSPGVGHKKGNVNVESSEDDFKHKEGRKLQQTNGQNHFKTGSTDDFAPTSPGNSPGIGHKKGHANVKGFKDDFAPTEEIRLQKMNGQDHFKTGSTDDFAPTTPGNSPGMGHKKGDDFKPTTPGHSPGVGHAVKNDEPKA</sequence>
<name>PCEP9_ARATH</name>
<evidence type="ECO:0000250" key="1">
    <source>
        <dbReference type="UniProtKB" id="Q8L8Y3"/>
    </source>
</evidence>
<evidence type="ECO:0000255" key="2"/>
<evidence type="ECO:0000256" key="3">
    <source>
        <dbReference type="SAM" id="MobiDB-lite"/>
    </source>
</evidence>
<evidence type="ECO:0000269" key="4">
    <source>
    </source>
</evidence>
<evidence type="ECO:0000269" key="5">
    <source>
    </source>
</evidence>
<evidence type="ECO:0000269" key="6">
    <source>
    </source>
</evidence>
<evidence type="ECO:0000303" key="7">
    <source>
    </source>
</evidence>
<evidence type="ECO:0000303" key="8">
    <source>
    </source>
</evidence>
<evidence type="ECO:0000305" key="9"/>
<evidence type="ECO:0000305" key="10">
    <source>
    </source>
</evidence>
<evidence type="ECO:0000312" key="11">
    <source>
        <dbReference type="Araport" id="AT3G50610"/>
    </source>
</evidence>
<evidence type="ECO:0000312" key="12">
    <source>
        <dbReference type="EMBL" id="CAB62490.1"/>
    </source>
</evidence>